<accession>P09162</accession>
<accession>Q2M6U3</accession>
<proteinExistence type="predicted"/>
<feature type="chain" id="PRO_0000169701" description="Uncharacterized protein YjaA">
    <location>
        <begin position="1"/>
        <end position="127"/>
    </location>
</feature>
<keyword id="KW-1185">Reference proteome</keyword>
<dbReference type="EMBL" id="X02800">
    <property type="protein sequence ID" value="CAA26569.1"/>
    <property type="molecule type" value="Genomic_DNA"/>
</dbReference>
<dbReference type="EMBL" id="U00006">
    <property type="protein sequence ID" value="AAC43105.1"/>
    <property type="molecule type" value="Genomic_DNA"/>
</dbReference>
<dbReference type="EMBL" id="U00096">
    <property type="protein sequence ID" value="AAC76981.1"/>
    <property type="molecule type" value="Genomic_DNA"/>
</dbReference>
<dbReference type="EMBL" id="AP009048">
    <property type="protein sequence ID" value="BAE78013.1"/>
    <property type="molecule type" value="Genomic_DNA"/>
</dbReference>
<dbReference type="PIR" id="A24340">
    <property type="entry name" value="Q3ECE4"/>
</dbReference>
<dbReference type="RefSeq" id="NP_418435.1">
    <property type="nucleotide sequence ID" value="NC_000913.3"/>
</dbReference>
<dbReference type="RefSeq" id="WP_001326558.1">
    <property type="nucleotide sequence ID" value="NZ_SSZK01000049.1"/>
</dbReference>
<dbReference type="BioGRID" id="4259290">
    <property type="interactions" value="19"/>
</dbReference>
<dbReference type="BioGRID" id="852809">
    <property type="interactions" value="2"/>
</dbReference>
<dbReference type="FunCoup" id="P09162">
    <property type="interactions" value="20"/>
</dbReference>
<dbReference type="IntAct" id="P09162">
    <property type="interactions" value="9"/>
</dbReference>
<dbReference type="STRING" id="511145.b4011"/>
<dbReference type="PaxDb" id="511145-b4011"/>
<dbReference type="EnsemblBacteria" id="AAC76981">
    <property type="protein sequence ID" value="AAC76981"/>
    <property type="gene ID" value="b4011"/>
</dbReference>
<dbReference type="GeneID" id="948515"/>
<dbReference type="KEGG" id="ecj:JW3971"/>
<dbReference type="KEGG" id="eco:b4011"/>
<dbReference type="KEGG" id="ecoc:C3026_21670"/>
<dbReference type="PATRIC" id="fig|1411691.4.peg.2702"/>
<dbReference type="EchoBASE" id="EB1191"/>
<dbReference type="eggNOG" id="ENOG50338GQ">
    <property type="taxonomic scope" value="Bacteria"/>
</dbReference>
<dbReference type="HOGENOM" id="CLU_154451_0_0_6"/>
<dbReference type="InParanoid" id="P09162"/>
<dbReference type="OMA" id="VEERAIM"/>
<dbReference type="OrthoDB" id="8612466at2"/>
<dbReference type="BioCyc" id="EcoCyc:EG11206-MONOMER"/>
<dbReference type="PRO" id="PR:P09162"/>
<dbReference type="Proteomes" id="UP000000625">
    <property type="component" value="Chromosome"/>
</dbReference>
<dbReference type="GO" id="GO:0071468">
    <property type="term" value="P:cellular response to acidic pH"/>
    <property type="evidence" value="ECO:0000315"/>
    <property type="project" value="EcoCyc"/>
</dbReference>
<dbReference type="GO" id="GO:0070301">
    <property type="term" value="P:cellular response to hydrogen peroxide"/>
    <property type="evidence" value="ECO:0000315"/>
    <property type="project" value="EcoCyc"/>
</dbReference>
<dbReference type="GO" id="GO:0044011">
    <property type="term" value="P:single-species biofilm formation on inanimate substrate"/>
    <property type="evidence" value="ECO:0000315"/>
    <property type="project" value="EcoCyc"/>
</dbReference>
<dbReference type="InterPro" id="IPR048149">
    <property type="entry name" value="YjaA"/>
</dbReference>
<dbReference type="NCBIfam" id="NF041448">
    <property type="entry name" value="stress_YjaA"/>
    <property type="match status" value="1"/>
</dbReference>
<sequence length="127" mass="14447">MSVLYIQIRRNQITVRDLESKREVSGDAAFSNQRLLIANFFVAEKVLQDLVLQLHPRSTWHSFLPAKRMDIVVSALEMNEGGLSQVEERILHEVVAGATLMKYRQFHIHAQSAVLSDSAVMAMLKQK</sequence>
<protein>
    <recommendedName>
        <fullName>Uncharacterized protein YjaA</fullName>
    </recommendedName>
</protein>
<name>YJAA_ECOLI</name>
<reference key="1">
    <citation type="journal article" date="1985" name="Nucleic Acids Res.">
        <title>The sequence of the distal end of the E. coli ribosomal RNA rrnE operon indicates conserved features are shared by rrn operons.</title>
        <authorList>
            <person name="Liebke H."/>
            <person name="Hatfull G."/>
        </authorList>
    </citation>
    <scope>NUCLEOTIDE SEQUENCE [GENOMIC DNA]</scope>
</reference>
<reference key="2">
    <citation type="journal article" date="1993" name="Nucleic Acids Res.">
        <title>Analysis of the Escherichia coli genome. IV. DNA sequence of the region from 89.2 to 92.8 minutes.</title>
        <authorList>
            <person name="Blattner F.R."/>
            <person name="Burland V.D."/>
            <person name="Plunkett G. III"/>
            <person name="Sofia H.J."/>
            <person name="Daniels D.L."/>
        </authorList>
    </citation>
    <scope>NUCLEOTIDE SEQUENCE [LARGE SCALE GENOMIC DNA]</scope>
    <source>
        <strain>K12 / MG1655 / ATCC 47076</strain>
    </source>
</reference>
<reference key="3">
    <citation type="journal article" date="1997" name="Science">
        <title>The complete genome sequence of Escherichia coli K-12.</title>
        <authorList>
            <person name="Blattner F.R."/>
            <person name="Plunkett G. III"/>
            <person name="Bloch C.A."/>
            <person name="Perna N.T."/>
            <person name="Burland V."/>
            <person name="Riley M."/>
            <person name="Collado-Vides J."/>
            <person name="Glasner J.D."/>
            <person name="Rode C.K."/>
            <person name="Mayhew G.F."/>
            <person name="Gregor J."/>
            <person name="Davis N.W."/>
            <person name="Kirkpatrick H.A."/>
            <person name="Goeden M.A."/>
            <person name="Rose D.J."/>
            <person name="Mau B."/>
            <person name="Shao Y."/>
        </authorList>
    </citation>
    <scope>NUCLEOTIDE SEQUENCE [LARGE SCALE GENOMIC DNA]</scope>
    <source>
        <strain>K12 / MG1655 / ATCC 47076</strain>
    </source>
</reference>
<reference key="4">
    <citation type="journal article" date="2006" name="Mol. Syst. Biol.">
        <title>Highly accurate genome sequences of Escherichia coli K-12 strains MG1655 and W3110.</title>
        <authorList>
            <person name="Hayashi K."/>
            <person name="Morooka N."/>
            <person name="Yamamoto Y."/>
            <person name="Fujita K."/>
            <person name="Isono K."/>
            <person name="Choi S."/>
            <person name="Ohtsubo E."/>
            <person name="Baba T."/>
            <person name="Wanner B.L."/>
            <person name="Mori H."/>
            <person name="Horiuchi T."/>
        </authorList>
    </citation>
    <scope>NUCLEOTIDE SEQUENCE [LARGE SCALE GENOMIC DNA]</scope>
    <source>
        <strain>K12 / W3110 / ATCC 27325 / DSM 5911</strain>
    </source>
</reference>
<organism>
    <name type="scientific">Escherichia coli (strain K12)</name>
    <dbReference type="NCBI Taxonomy" id="83333"/>
    <lineage>
        <taxon>Bacteria</taxon>
        <taxon>Pseudomonadati</taxon>
        <taxon>Pseudomonadota</taxon>
        <taxon>Gammaproteobacteria</taxon>
        <taxon>Enterobacterales</taxon>
        <taxon>Enterobacteriaceae</taxon>
        <taxon>Escherichia</taxon>
    </lineage>
</organism>
<gene>
    <name type="primary">yjaA</name>
    <name type="ordered locus">b4011</name>
    <name type="ordered locus">JW3971</name>
</gene>